<keyword id="KW-1185">Reference proteome</keyword>
<name>Y063_ABVP</name>
<reference key="1">
    <citation type="journal article" date="2007" name="Virology">
        <title>Genome of the Acidianus bottle-shaped virus and insights into the replication and packaging mechanisms.</title>
        <authorList>
            <person name="Peng X."/>
            <person name="Basta T."/>
            <person name="Haring M."/>
            <person name="Garrett R.A."/>
            <person name="Prangishvili D."/>
        </authorList>
    </citation>
    <scope>NUCLEOTIDE SEQUENCE [GENOMIC DNA]</scope>
</reference>
<organism>
    <name type="scientific">Acidianus bottle-shaped virus (isolate Italy/Pozzuoli)</name>
    <name type="common">ABV</name>
    <dbReference type="NCBI Taxonomy" id="654911"/>
    <lineage>
        <taxon>Viruses</taxon>
        <taxon>Viruses incertae sedis</taxon>
        <taxon>Ampullaviridae</taxon>
        <taxon>Bottigliavirus</taxon>
        <taxon>Bottigliavirus ABV</taxon>
    </lineage>
</organism>
<accession>A4ZUA6</accession>
<feature type="chain" id="PRO_0000384833" description="Uncharacterized protein ORF63">
    <location>
        <begin position="1"/>
        <end position="63"/>
    </location>
</feature>
<protein>
    <recommendedName>
        <fullName>Uncharacterized protein ORF63</fullName>
    </recommendedName>
</protein>
<dbReference type="EMBL" id="EF432053">
    <property type="protein sequence ID" value="ABP73410.1"/>
    <property type="molecule type" value="Genomic_DNA"/>
</dbReference>
<dbReference type="RefSeq" id="YP_001210324.1">
    <property type="nucleotide sequence ID" value="NC_009452.1"/>
</dbReference>
<dbReference type="GeneID" id="5129843"/>
<dbReference type="KEGG" id="vg:5129843"/>
<dbReference type="Proteomes" id="UP000000513">
    <property type="component" value="Segment"/>
</dbReference>
<organismHost>
    <name type="scientific">Acidianus convivator</name>
    <dbReference type="NCBI Taxonomy" id="269667"/>
</organismHost>
<proteinExistence type="predicted"/>
<gene>
    <name type="ORF">ORF63</name>
</gene>
<sequence>MMTQCKPLSFFLRNGRIIKKTDYGNYIRYEIIIRNQKLAILDCKDNQCIEIASFDLTKINKKK</sequence>